<accession>Q14K48</accession>
<gene>
    <name evidence="1" type="primary">gatB</name>
    <name type="ordered locus">FTF0021</name>
</gene>
<protein>
    <recommendedName>
        <fullName evidence="1">Aspartyl/glutamyl-tRNA(Asn/Gln) amidotransferase subunit B</fullName>
        <shortName evidence="1">Asp/Glu-ADT subunit B</shortName>
        <ecNumber evidence="1">6.3.5.-</ecNumber>
    </recommendedName>
</protein>
<keyword id="KW-0067">ATP-binding</keyword>
<keyword id="KW-0436">Ligase</keyword>
<keyword id="KW-0547">Nucleotide-binding</keyword>
<keyword id="KW-0648">Protein biosynthesis</keyword>
<reference key="1">
    <citation type="journal article" date="2007" name="PLoS ONE">
        <title>Genome sequencing shows that European isolates of Francisella tularensis subspecies tularensis are almost identical to US laboratory strain Schu S4.</title>
        <authorList>
            <person name="Chaudhuri R.R."/>
            <person name="Ren C.-P."/>
            <person name="Desmond L."/>
            <person name="Vincent G.A."/>
            <person name="Silman N.J."/>
            <person name="Brehm J.K."/>
            <person name="Elmore M.J."/>
            <person name="Hudson M.J."/>
            <person name="Forsman M."/>
            <person name="Isherwood K.E."/>
            <person name="Gurycova D."/>
            <person name="Minton N.P."/>
            <person name="Titball R.W."/>
            <person name="Pallen M.J."/>
            <person name="Vipond R."/>
        </authorList>
    </citation>
    <scope>NUCLEOTIDE SEQUENCE [LARGE SCALE GENOMIC DNA]</scope>
    <source>
        <strain>FSC 198</strain>
    </source>
</reference>
<evidence type="ECO:0000255" key="1">
    <source>
        <dbReference type="HAMAP-Rule" id="MF_00121"/>
    </source>
</evidence>
<dbReference type="EC" id="6.3.5.-" evidence="1"/>
<dbReference type="EMBL" id="AM286280">
    <property type="protein sequence ID" value="CAL08037.1"/>
    <property type="molecule type" value="Genomic_DNA"/>
</dbReference>
<dbReference type="RefSeq" id="WP_003017411.1">
    <property type="nucleotide sequence ID" value="NC_008245.1"/>
</dbReference>
<dbReference type="SMR" id="Q14K48"/>
<dbReference type="KEGG" id="ftf:FTF0021"/>
<dbReference type="HOGENOM" id="CLU_019240_0_0_6"/>
<dbReference type="GO" id="GO:0050566">
    <property type="term" value="F:asparaginyl-tRNA synthase (glutamine-hydrolyzing) activity"/>
    <property type="evidence" value="ECO:0007669"/>
    <property type="project" value="RHEA"/>
</dbReference>
<dbReference type="GO" id="GO:0005524">
    <property type="term" value="F:ATP binding"/>
    <property type="evidence" value="ECO:0007669"/>
    <property type="project" value="UniProtKB-KW"/>
</dbReference>
<dbReference type="GO" id="GO:0050567">
    <property type="term" value="F:glutaminyl-tRNA synthase (glutamine-hydrolyzing) activity"/>
    <property type="evidence" value="ECO:0007669"/>
    <property type="project" value="UniProtKB-UniRule"/>
</dbReference>
<dbReference type="GO" id="GO:0070681">
    <property type="term" value="P:glutaminyl-tRNAGln biosynthesis via transamidation"/>
    <property type="evidence" value="ECO:0007669"/>
    <property type="project" value="TreeGrafter"/>
</dbReference>
<dbReference type="GO" id="GO:0006412">
    <property type="term" value="P:translation"/>
    <property type="evidence" value="ECO:0007669"/>
    <property type="project" value="UniProtKB-UniRule"/>
</dbReference>
<dbReference type="FunFam" id="1.10.10.410:FF:000001">
    <property type="entry name" value="Aspartyl/glutamyl-tRNA(Asn/Gln) amidotransferase subunit B"/>
    <property type="match status" value="1"/>
</dbReference>
<dbReference type="Gene3D" id="1.10.10.410">
    <property type="match status" value="1"/>
</dbReference>
<dbReference type="HAMAP" id="MF_00121">
    <property type="entry name" value="GatB"/>
    <property type="match status" value="1"/>
</dbReference>
<dbReference type="InterPro" id="IPR017959">
    <property type="entry name" value="Asn/Gln-tRNA_amidoTrfase_suB/E"/>
</dbReference>
<dbReference type="InterPro" id="IPR006075">
    <property type="entry name" value="Asn/Gln-tRNA_Trfase_suB/E_cat"/>
</dbReference>
<dbReference type="InterPro" id="IPR018027">
    <property type="entry name" value="Asn/Gln_amidotransferase"/>
</dbReference>
<dbReference type="InterPro" id="IPR003789">
    <property type="entry name" value="Asn/Gln_tRNA_amidoTrase-B-like"/>
</dbReference>
<dbReference type="InterPro" id="IPR004413">
    <property type="entry name" value="GatB"/>
</dbReference>
<dbReference type="InterPro" id="IPR023168">
    <property type="entry name" value="GatB_Yqey_C_2"/>
</dbReference>
<dbReference type="InterPro" id="IPR017958">
    <property type="entry name" value="Gln-tRNA_amidoTrfase_suB_CS"/>
</dbReference>
<dbReference type="InterPro" id="IPR014746">
    <property type="entry name" value="Gln_synth/guanido_kin_cat_dom"/>
</dbReference>
<dbReference type="NCBIfam" id="TIGR00133">
    <property type="entry name" value="gatB"/>
    <property type="match status" value="1"/>
</dbReference>
<dbReference type="NCBIfam" id="NF004012">
    <property type="entry name" value="PRK05477.1-2"/>
    <property type="match status" value="1"/>
</dbReference>
<dbReference type="NCBIfam" id="NF004014">
    <property type="entry name" value="PRK05477.1-4"/>
    <property type="match status" value="1"/>
</dbReference>
<dbReference type="PANTHER" id="PTHR11659">
    <property type="entry name" value="GLUTAMYL-TRNA GLN AMIDOTRANSFERASE SUBUNIT B MITOCHONDRIAL AND PROKARYOTIC PET112-RELATED"/>
    <property type="match status" value="1"/>
</dbReference>
<dbReference type="PANTHER" id="PTHR11659:SF0">
    <property type="entry name" value="GLUTAMYL-TRNA(GLN) AMIDOTRANSFERASE SUBUNIT B, MITOCHONDRIAL"/>
    <property type="match status" value="1"/>
</dbReference>
<dbReference type="Pfam" id="PF02934">
    <property type="entry name" value="GatB_N"/>
    <property type="match status" value="1"/>
</dbReference>
<dbReference type="Pfam" id="PF02637">
    <property type="entry name" value="GatB_Yqey"/>
    <property type="match status" value="1"/>
</dbReference>
<dbReference type="SMART" id="SM00845">
    <property type="entry name" value="GatB_Yqey"/>
    <property type="match status" value="1"/>
</dbReference>
<dbReference type="SUPFAM" id="SSF89095">
    <property type="entry name" value="GatB/YqeY motif"/>
    <property type="match status" value="1"/>
</dbReference>
<dbReference type="SUPFAM" id="SSF55931">
    <property type="entry name" value="Glutamine synthetase/guanido kinase"/>
    <property type="match status" value="1"/>
</dbReference>
<dbReference type="PROSITE" id="PS01234">
    <property type="entry name" value="GATB"/>
    <property type="match status" value="1"/>
</dbReference>
<proteinExistence type="inferred from homology"/>
<sequence length="473" mass="53093">MNWEMVIGLEVHIQLSTKSKLFSTSATKYGQHQNTQAAFLDLGLPGTLPVVNKEAIRKAVIFGLAVDAKISKDSFFARKNYFYPDLSKGYQISQSTNPIVQEGRLEIETSKGLKTIRIERAHLEEDAGKSVHGYIAGETGLDYNRAGTPLLEIVTYPDFRSAEEVVAYLKKLHQLVKHLGICDGNMQEGSFRCDVNLSIRPQGQAKFGTRAELKNINSFRFIDKAIEYEYARQVSVLESGGEVVQETRLYDADANETRSMRAKEDAFDYRYFPDPDLLPLVITDEYIESIKKQMPLKSEEREAVYREHLAEQEVEFLLSNLEIADYYDKVAVVIGYKPAYNWITVDLISTLNRAEKEFSSDVVPAEILLEIIANVQKDIISQANAKKVIAEYIDAPSAIEAIIEKLGLKQVSDEGMIRELVQGIIAANPQQAADFKAGKTKLMSFFVGQAMKASKGKANPKQVNQIVQEELNK</sequence>
<name>GATB_FRAT1</name>
<organism>
    <name type="scientific">Francisella tularensis subsp. tularensis (strain FSC 198)</name>
    <dbReference type="NCBI Taxonomy" id="393115"/>
    <lineage>
        <taxon>Bacteria</taxon>
        <taxon>Pseudomonadati</taxon>
        <taxon>Pseudomonadota</taxon>
        <taxon>Gammaproteobacteria</taxon>
        <taxon>Thiotrichales</taxon>
        <taxon>Francisellaceae</taxon>
        <taxon>Francisella</taxon>
    </lineage>
</organism>
<comment type="function">
    <text evidence="1">Allows the formation of correctly charged Asn-tRNA(Asn) or Gln-tRNA(Gln) through the transamidation of misacylated Asp-tRNA(Asn) or Glu-tRNA(Gln) in organisms which lack either or both of asparaginyl-tRNA or glutaminyl-tRNA synthetases. The reaction takes place in the presence of glutamine and ATP through an activated phospho-Asp-tRNA(Asn) or phospho-Glu-tRNA(Gln).</text>
</comment>
<comment type="catalytic activity">
    <reaction evidence="1">
        <text>L-glutamyl-tRNA(Gln) + L-glutamine + ATP + H2O = L-glutaminyl-tRNA(Gln) + L-glutamate + ADP + phosphate + H(+)</text>
        <dbReference type="Rhea" id="RHEA:17521"/>
        <dbReference type="Rhea" id="RHEA-COMP:9681"/>
        <dbReference type="Rhea" id="RHEA-COMP:9684"/>
        <dbReference type="ChEBI" id="CHEBI:15377"/>
        <dbReference type="ChEBI" id="CHEBI:15378"/>
        <dbReference type="ChEBI" id="CHEBI:29985"/>
        <dbReference type="ChEBI" id="CHEBI:30616"/>
        <dbReference type="ChEBI" id="CHEBI:43474"/>
        <dbReference type="ChEBI" id="CHEBI:58359"/>
        <dbReference type="ChEBI" id="CHEBI:78520"/>
        <dbReference type="ChEBI" id="CHEBI:78521"/>
        <dbReference type="ChEBI" id="CHEBI:456216"/>
    </reaction>
</comment>
<comment type="catalytic activity">
    <reaction evidence="1">
        <text>L-aspartyl-tRNA(Asn) + L-glutamine + ATP + H2O = L-asparaginyl-tRNA(Asn) + L-glutamate + ADP + phosphate + 2 H(+)</text>
        <dbReference type="Rhea" id="RHEA:14513"/>
        <dbReference type="Rhea" id="RHEA-COMP:9674"/>
        <dbReference type="Rhea" id="RHEA-COMP:9677"/>
        <dbReference type="ChEBI" id="CHEBI:15377"/>
        <dbReference type="ChEBI" id="CHEBI:15378"/>
        <dbReference type="ChEBI" id="CHEBI:29985"/>
        <dbReference type="ChEBI" id="CHEBI:30616"/>
        <dbReference type="ChEBI" id="CHEBI:43474"/>
        <dbReference type="ChEBI" id="CHEBI:58359"/>
        <dbReference type="ChEBI" id="CHEBI:78515"/>
        <dbReference type="ChEBI" id="CHEBI:78516"/>
        <dbReference type="ChEBI" id="CHEBI:456216"/>
    </reaction>
</comment>
<comment type="subunit">
    <text evidence="1">Heterotrimer of A, B and C subunits.</text>
</comment>
<comment type="similarity">
    <text evidence="1">Belongs to the GatB/GatE family. GatB subfamily.</text>
</comment>
<feature type="chain" id="PRO_1000015966" description="Aspartyl/glutamyl-tRNA(Asn/Gln) amidotransferase subunit B">
    <location>
        <begin position="1"/>
        <end position="473"/>
    </location>
</feature>